<feature type="chain" id="PRO_0000164859" description="Maturation protein A">
    <location>
        <begin position="1"/>
        <end position="393"/>
    </location>
</feature>
<feature type="region of interest" description="Viral RNA-binding" evidence="2">
    <location>
        <begin position="26"/>
        <end position="233"/>
    </location>
</feature>
<organismHost>
    <name type="scientific">Escherichia coli</name>
    <dbReference type="NCBI Taxonomy" id="562"/>
</organismHost>
<sequence>MRAFSTLDRENETFVPSVRVYADGETEDNSFSLKYRSNWTPGRFNSTGAKTKQWHYPSPYSRGALSVTSIDQGAYKRSGSSWGRPYEEKAGFGFSLDARSCYSLFPVSQNLTYIEVPQNVANRASTEVLQKVTQGNFNLGVALAEARSTASQLATQTIALVKAYTAARRGNWRQALRYLALNEDRKFRSKHVAGRWLELQFGWLPLMSDIQGAYEMLTKVHLQEFLPMRAVRQVGTNIKLDGRLSYPAANFQTTCNISRRIVIWFYINDARLAWLSSLGILNPLGIVWEKVPFSFVVDWLLPVGNMLEGLTAPVGCSYMSGTVTDVITGESIISVDAPYGWTVERQGTAKAQISAMHRGVQSVWPTTGAYVKSPFSMVHTLDALALIRQRLSR</sequence>
<accession>P03610</accession>
<dbReference type="EMBL" id="V00642">
    <property type="protein sequence ID" value="CAA23988.1"/>
    <property type="molecule type" value="mRNA"/>
</dbReference>
<dbReference type="EMBL" id="M25187">
    <property type="protein sequence ID" value="AAA32257.1"/>
    <property type="molecule type" value="Genomic_RNA"/>
</dbReference>
<dbReference type="PIR" id="A93176">
    <property type="entry name" value="ACBPMS"/>
</dbReference>
<dbReference type="PDB" id="5TC1">
    <property type="method" value="EM"/>
    <property type="resolution" value="3.60 A"/>
    <property type="chains" value="M=1-393"/>
</dbReference>
<dbReference type="PDB" id="6NM5">
    <property type="method" value="EM"/>
    <property type="resolution" value="6.20 A"/>
    <property type="chains" value="M=1-393"/>
</dbReference>
<dbReference type="PDBsum" id="5TC1"/>
<dbReference type="PDBsum" id="6NM5"/>
<dbReference type="EMDB" id="EMD-8397"/>
<dbReference type="EMDB" id="EMD-9397"/>
<dbReference type="SMR" id="P03610"/>
<dbReference type="OrthoDB" id="19507at10239"/>
<dbReference type="Proteomes" id="UP000002127">
    <property type="component" value="Genome"/>
</dbReference>
<dbReference type="GO" id="GO:0044423">
    <property type="term" value="C:virion component"/>
    <property type="evidence" value="ECO:0007669"/>
    <property type="project" value="UniProtKB-KW"/>
</dbReference>
<dbReference type="GO" id="GO:0003723">
    <property type="term" value="F:RNA binding"/>
    <property type="evidence" value="ECO:0000314"/>
    <property type="project" value="UniProtKB"/>
</dbReference>
<dbReference type="GO" id="GO:0099009">
    <property type="term" value="P:viral genome circularization"/>
    <property type="evidence" value="ECO:0007669"/>
    <property type="project" value="UniProtKB-KW"/>
</dbReference>
<dbReference type="GO" id="GO:0039666">
    <property type="term" value="P:virion attachment to host cell pilus"/>
    <property type="evidence" value="ECO:0000314"/>
    <property type="project" value="UniProtKB"/>
</dbReference>
<dbReference type="InterPro" id="IPR005563">
    <property type="entry name" value="A_protein"/>
</dbReference>
<dbReference type="Pfam" id="PF03863">
    <property type="entry name" value="Phage_mat-A"/>
    <property type="match status" value="1"/>
</dbReference>
<keyword id="KW-0002">3D-structure</keyword>
<keyword id="KW-0903">Direct protein sequencing</keyword>
<keyword id="KW-0945">Host-virus interaction</keyword>
<keyword id="KW-1185">Reference proteome</keyword>
<keyword id="KW-0694">RNA-binding</keyword>
<keyword id="KW-1161">Viral attachment to host cell</keyword>
<keyword id="KW-1175">Viral attachment to host cell pilus</keyword>
<keyword id="KW-1253">Viral genome circularization</keyword>
<keyword id="KW-1162">Viral penetration into host cytoplasm</keyword>
<keyword id="KW-0946">Virion</keyword>
<keyword id="KW-1160">Virus entry into host cell</keyword>
<name>MATA_BPMS2</name>
<protein>
    <recommendedName>
        <fullName>Maturation protein A</fullName>
        <shortName>MP</shortName>
    </recommendedName>
    <alternativeName>
        <fullName>Assembly protein</fullName>
        <shortName>A protein</shortName>
    </alternativeName>
</protein>
<proteinExistence type="evidence at protein level"/>
<gene>
    <name type="primary">A</name>
</gene>
<evidence type="ECO:0000269" key="1">
    <source>
    </source>
</evidence>
<evidence type="ECO:0000269" key="2">
    <source>
    </source>
</evidence>
<evidence type="ECO:0000269" key="3">
    <source>
    </source>
</evidence>
<evidence type="ECO:0000269" key="4">
    <source>
    </source>
</evidence>
<evidence type="ECO:0000269" key="5">
    <source>
    </source>
</evidence>
<evidence type="ECO:0000305" key="6"/>
<evidence type="ECO:0000305" key="7">
    <source>
    </source>
</evidence>
<evidence type="ECO:0007744" key="8">
    <source>
        <dbReference type="PDB" id="5TC1"/>
    </source>
</evidence>
<evidence type="ECO:0007744" key="9">
    <source>
        <dbReference type="PDB" id="6NM5"/>
    </source>
</evidence>
<organism>
    <name type="scientific">Escherichia phage MS2</name>
    <name type="common">Bacteriophage MS2</name>
    <dbReference type="NCBI Taxonomy" id="12022"/>
    <lineage>
        <taxon>Viruses</taxon>
        <taxon>Riboviria</taxon>
        <taxon>Orthornavirae</taxon>
        <taxon>Lenarviricota</taxon>
        <taxon>Leviviricetes</taxon>
        <taxon>Norzivirales</taxon>
        <taxon>Fiersviridae</taxon>
        <taxon>Emesvirus</taxon>
        <taxon>Emesvirus zinderi</taxon>
    </lineage>
</organism>
<comment type="function">
    <text evidence="1 2 3 5">The maturation protein is required for the typical attachment of the phage to the side of the bacterial F-pili (PubMed:23810697, PubMed:27992877). Binds to sequences located toward each end of the genome, hence circularizing it (PubMed:26608810). The RNA genome-maturation protein A complex is released from the capsid upon host receptor binding (PubMed:23810697). Maturation protein A enters the cell along with the viral RNA (PubMed:4551992).</text>
</comment>
<comment type="subunit">
    <text evidence="1 3 4">Interacts with the host pilus.</text>
</comment>
<comment type="subcellular location">
    <subcellularLocation>
        <location>Virion</location>
    </subcellularLocation>
    <text evidence="3 7">A single copy of the maturation protein is present in the virion and replaces a coat protein dimer at one of the icosahedral two-fold axes.</text>
</comment>
<comment type="PTM">
    <text evidence="5">During internalization, MP is proteolytically cleaved into two fragments allowing translation and replication to start.</text>
</comment>
<comment type="similarity">
    <text evidence="6">Belongs to the Leviviricetes maturation protein family.</text>
</comment>
<reference key="1">
    <citation type="journal article" date="1975" name="Nature">
        <title>A-protein gene of bacteriophage MS2.</title>
        <authorList>
            <person name="Fiers W."/>
            <person name="Contreras R."/>
            <person name="Duerinck F."/>
            <person name="Haegeman G."/>
            <person name="Merregaert J."/>
            <person name="Min Jou W."/>
            <person name="Raeymaekers A."/>
            <person name="Volckaert G."/>
            <person name="Ysebaert M."/>
            <person name="Vandekerckhove J."/>
            <person name="Nolf F."/>
            <person name="van Montagu M."/>
        </authorList>
    </citation>
    <scope>NUCLEOTIDE SEQUENCE [MRNA]</scope>
</reference>
<reference key="2">
    <citation type="journal article" date="1977" name="J. Biol. Chem.">
        <title>Sequence of the A-protein of coliphage MS2. III. Isolation and sequence determination of thermolytic peptides and soluble cyanogen bromide fragments: alignment of 363 amino acid residues of a total of 393.</title>
        <authorList>
            <person name="Vandekerckhove J."/>
            <person name="van Montagu M."/>
        </authorList>
    </citation>
    <scope>PROTEIN SEQUENCE</scope>
</reference>
<reference key="3">
    <citation type="journal article" date="1973" name="Nature New Biol.">
        <title>Bacteriophage Ms2 RNA: nucleotide sequence of the end of the a protein gene and the intercistronic region.</title>
        <authorList>
            <person name="Contreras R.R."/>
            <person name="Ysebaert M."/>
            <person name="Jou W.M."/>
            <person name="Fiers W."/>
        </authorList>
    </citation>
    <scope>NUCLEOTIDE SEQUENCE [MRNA] OF 350-393</scope>
</reference>
<reference key="4">
    <citation type="journal article" date="1977" name="J. Biol. Chem.">
        <title>Sequence of the A-protein of coliphage MS2. II. Isolation and sequence determination of chymotryptic peptides.</title>
        <authorList>
            <person name="Vandekerckhove J."/>
            <person name="Gielen J.G."/>
            <person name="van Montagu M."/>
        </authorList>
    </citation>
    <scope>PARTIAL PROTEIN SEQUENCE</scope>
</reference>
<reference key="5">
    <citation type="journal article" date="1977" name="J. Biol. Chem.">
        <title>Sequence of the A-protein of coliphage MS2. I. Isolation of A-protein, determination of the NH2- and COOH-terminal sequences, isolation and amino acid sequence of the tryptic peptides.</title>
        <authorList>
            <person name="Nolf F."/>
            <person name="Vandekerckhove J."/>
            <person name="Lenaerts A.K."/>
            <person name="van Montagu M."/>
        </authorList>
    </citation>
    <scope>PARTIAL PROTEIN SEQUENCE</scope>
</reference>
<reference key="6">
    <citation type="journal article" date="1972" name="Virology">
        <title>Stages in phage R17 infection. VI. Injection of A protein and RNA into the host cell.</title>
        <authorList>
            <person name="Krahn P.M."/>
            <person name="O'Callaghan R.J."/>
            <person name="Paranchych W."/>
        </authorList>
    </citation>
    <scope>FUNCTION</scope>
    <scope>PROTEOLYTIC CLEAVAGE</scope>
</reference>
<reference key="7">
    <citation type="journal article" date="1981" name="Biochim. Biophys. Acta">
        <title>Localization of A protein in the RNA-A protein complex of RNA phage MS2.</title>
        <authorList>
            <person name="Shiba T."/>
            <person name="Suzuki Y."/>
        </authorList>
    </citation>
    <scope>RNA-BINDING</scope>
</reference>
<reference key="8">
    <citation type="journal article" date="2013" name="Structure">
        <title>The asymmetric structure of an icosahedral virus bound to its receptor suggests a mechanism for genome release.</title>
        <authorList>
            <person name="Dent K.C."/>
            <person name="Thompson R."/>
            <person name="Barker A.M."/>
            <person name="Hiscox J.A."/>
            <person name="Barr J.N."/>
            <person name="Stockley P.G."/>
            <person name="Ranson N.A."/>
        </authorList>
    </citation>
    <scope>FUNCTION</scope>
    <scope>SUBCELLULAR LOCATION</scope>
    <scope>INTERACTION WITH THE HOST PILUS</scope>
</reference>
<reference key="9">
    <citation type="journal article" date="2016" name="J. Mol. Biol.">
        <title>Direct evidence for packaging signal-mediated assembly of bacteriophage MS2.</title>
        <authorList>
            <person name="Rolfsson O."/>
            <person name="Middleton S."/>
            <person name="Manfield I.W."/>
            <person name="White S.J."/>
            <person name="Fan B."/>
            <person name="Vaughan R."/>
            <person name="Ranson N.A."/>
            <person name="Dykeman E."/>
            <person name="Twarock R."/>
            <person name="Ford J."/>
            <person name="Kao C.C."/>
            <person name="Stockley P.G."/>
        </authorList>
    </citation>
    <scope>FUNCTION</scope>
    <scope>RNA-BINDING</scope>
</reference>
<reference evidence="8" key="10">
    <citation type="journal article" date="2017" name="Nature">
        <title>In situ structures of the genome and genome-delivery apparatus in a single-stranded RNA virus.</title>
        <authorList>
            <person name="Dai X."/>
            <person name="Li Z."/>
            <person name="Lai M."/>
            <person name="Shu S."/>
            <person name="Du Y."/>
            <person name="Zhou Z.H."/>
            <person name="Sun R."/>
        </authorList>
    </citation>
    <scope>STRUCTURE BY ELECTRON MICROSCOPY (3.60 ANGSTROMS)</scope>
    <scope>RNA-BINDING</scope>
    <scope>SUBCELLULAR LOCATION</scope>
    <scope>FUNCTION</scope>
    <scope>INTERACTION WITH THE HOST PILUS</scope>
</reference>
<reference evidence="9" key="11">
    <citation type="journal article" date="2019" name="Nat. Commun.">
        <title>Structural basis for the adsorption of a single-stranded RNA bacteriophage.</title>
        <authorList>
            <person name="Meng R."/>
            <person name="Jiang M."/>
            <person name="Cui Z."/>
            <person name="Chang J.Y."/>
            <person name="Yang K."/>
            <person name="Jakana J."/>
            <person name="Yu X."/>
            <person name="Wang Z."/>
            <person name="Hu B."/>
            <person name="Zhang J."/>
        </authorList>
    </citation>
    <scope>STRUCTURE BY ELECTRON MICROSCOPY (6.20 ANGSTROMS)</scope>
    <scope>INTERACTION WITH THE HOST PILUS</scope>
</reference>